<feature type="chain" id="PRO_0000064321" description="Di-/tripeptide transporter">
    <location>
        <begin position="1"/>
        <end position="497"/>
    </location>
</feature>
<feature type="transmembrane region" description="Helical" evidence="1">
    <location>
        <begin position="3"/>
        <end position="23"/>
    </location>
</feature>
<feature type="transmembrane region" description="Helical" evidence="1">
    <location>
        <begin position="26"/>
        <end position="46"/>
    </location>
</feature>
<feature type="transmembrane region" description="Helical" evidence="1">
    <location>
        <begin position="57"/>
        <end position="77"/>
    </location>
</feature>
<feature type="transmembrane region" description="Helical" evidence="1">
    <location>
        <begin position="84"/>
        <end position="104"/>
    </location>
</feature>
<feature type="transmembrane region" description="Helical" evidence="1">
    <location>
        <begin position="119"/>
        <end position="139"/>
    </location>
</feature>
<feature type="transmembrane region" description="Helical" evidence="1">
    <location>
        <begin position="155"/>
        <end position="175"/>
    </location>
</feature>
<feature type="transmembrane region" description="Helical" evidence="1">
    <location>
        <begin position="199"/>
        <end position="219"/>
    </location>
</feature>
<feature type="transmembrane region" description="Helical" evidence="1">
    <location>
        <begin position="227"/>
        <end position="247"/>
    </location>
</feature>
<feature type="transmembrane region" description="Helical" evidence="1">
    <location>
        <begin position="294"/>
        <end position="314"/>
    </location>
</feature>
<feature type="transmembrane region" description="Helical" evidence="1">
    <location>
        <begin position="321"/>
        <end position="341"/>
    </location>
</feature>
<feature type="transmembrane region" description="Helical" evidence="1">
    <location>
        <begin position="372"/>
        <end position="392"/>
    </location>
</feature>
<feature type="transmembrane region" description="Helical" evidence="1">
    <location>
        <begin position="452"/>
        <end position="472"/>
    </location>
</feature>
<dbReference type="EMBL" id="U77486">
    <property type="protein sequence ID" value="AAC45382.1"/>
    <property type="molecule type" value="Genomic_DNA"/>
</dbReference>
<dbReference type="SMR" id="O07380"/>
<dbReference type="eggNOG" id="COG3104">
    <property type="taxonomic scope" value="Bacteria"/>
</dbReference>
<dbReference type="GO" id="GO:0005886">
    <property type="term" value="C:plasma membrane"/>
    <property type="evidence" value="ECO:0007669"/>
    <property type="project" value="UniProtKB-SubCell"/>
</dbReference>
<dbReference type="GO" id="GO:1904680">
    <property type="term" value="F:peptide transmembrane transporter activity"/>
    <property type="evidence" value="ECO:0007669"/>
    <property type="project" value="InterPro"/>
</dbReference>
<dbReference type="GO" id="GO:0006857">
    <property type="term" value="P:oligopeptide transport"/>
    <property type="evidence" value="ECO:0007669"/>
    <property type="project" value="InterPro"/>
</dbReference>
<dbReference type="GO" id="GO:0015031">
    <property type="term" value="P:protein transport"/>
    <property type="evidence" value="ECO:0007669"/>
    <property type="project" value="UniProtKB-KW"/>
</dbReference>
<dbReference type="Gene3D" id="1.20.1250.20">
    <property type="entry name" value="MFS general substrate transporter like domains"/>
    <property type="match status" value="1"/>
</dbReference>
<dbReference type="InterPro" id="IPR005279">
    <property type="entry name" value="Dipep/tripep_permease"/>
</dbReference>
<dbReference type="InterPro" id="IPR049285">
    <property type="entry name" value="DUF4931_C"/>
</dbReference>
<dbReference type="InterPro" id="IPR020846">
    <property type="entry name" value="MFS_dom"/>
</dbReference>
<dbReference type="InterPro" id="IPR036259">
    <property type="entry name" value="MFS_trans_sf"/>
</dbReference>
<dbReference type="InterPro" id="IPR050171">
    <property type="entry name" value="MFS_Transporters"/>
</dbReference>
<dbReference type="InterPro" id="IPR000109">
    <property type="entry name" value="POT_fam"/>
</dbReference>
<dbReference type="InterPro" id="IPR018456">
    <property type="entry name" value="PTR2_symporter_CS"/>
</dbReference>
<dbReference type="NCBIfam" id="TIGR00924">
    <property type="entry name" value="yjdL_sub1_fam"/>
    <property type="match status" value="1"/>
</dbReference>
<dbReference type="PANTHER" id="PTHR23517:SF15">
    <property type="entry name" value="PROTON-DEPENDENT OLIGOPEPTIDE FAMILY TRANSPORT PROTEIN"/>
    <property type="match status" value="1"/>
</dbReference>
<dbReference type="PANTHER" id="PTHR23517">
    <property type="entry name" value="RESISTANCE PROTEIN MDTM, PUTATIVE-RELATED-RELATED"/>
    <property type="match status" value="1"/>
</dbReference>
<dbReference type="Pfam" id="PF20956">
    <property type="entry name" value="DUF4931_C"/>
    <property type="match status" value="1"/>
</dbReference>
<dbReference type="Pfam" id="PF00854">
    <property type="entry name" value="PTR2"/>
    <property type="match status" value="1"/>
</dbReference>
<dbReference type="SUPFAM" id="SSF103473">
    <property type="entry name" value="MFS general substrate transporter"/>
    <property type="match status" value="1"/>
</dbReference>
<dbReference type="PROSITE" id="PS50850">
    <property type="entry name" value="MFS"/>
    <property type="match status" value="1"/>
</dbReference>
<dbReference type="PROSITE" id="PS01022">
    <property type="entry name" value="PTR2_1"/>
    <property type="match status" value="1"/>
</dbReference>
<dbReference type="PROSITE" id="PS01023">
    <property type="entry name" value="PTR2_2"/>
    <property type="match status" value="1"/>
</dbReference>
<comment type="function">
    <text>Proton-dependent uptake of di- or tri-peptides.</text>
</comment>
<comment type="subcellular location">
    <subcellularLocation>
        <location>Cell membrane</location>
        <topology>Multi-pass membrane protein</topology>
    </subcellularLocation>
</comment>
<comment type="similarity">
    <text evidence="2">Belongs to the major facilitator superfamily. Proton-dependent oligopeptide transporter (POT/PTR) (TC 2.A.17) family.</text>
</comment>
<evidence type="ECO:0000255" key="1"/>
<evidence type="ECO:0000305" key="2"/>
<reference key="1">
    <citation type="journal article" date="1997" name="Appl. Environ. Microbiol.">
        <title>Cloning and functional expression in Escherichia coli of the gene encoding the di- and tripeptide transport protein of Lactobacillus helveticus.</title>
        <authorList>
            <person name="Nakajima H."/>
            <person name="Hagting A."/>
            <person name="Kunji E.R.S."/>
            <person name="Poolman B."/>
            <person name="Konings W.N."/>
        </authorList>
    </citation>
    <scope>NUCLEOTIDE SEQUENCE [GENOMIC DNA]</scope>
    <source>
        <strain>ATCC 15009 / DSM 20075 / BCRC 12936 / JCM 1120 / NBRC 15019 / NCIMB 11971 / NRRL B-4526 / Lh12</strain>
    </source>
</reference>
<proteinExistence type="inferred from homology"/>
<keyword id="KW-1003">Cell membrane</keyword>
<keyword id="KW-0472">Membrane</keyword>
<keyword id="KW-0571">Peptide transport</keyword>
<keyword id="KW-0653">Protein transport</keyword>
<keyword id="KW-0812">Transmembrane</keyword>
<keyword id="KW-1133">Transmembrane helix</keyword>
<keyword id="KW-0813">Transport</keyword>
<gene>
    <name type="primary">dtpT</name>
</gene>
<accession>O07380</accession>
<protein>
    <recommendedName>
        <fullName>Di-/tripeptide transporter</fullName>
    </recommendedName>
</protein>
<organism>
    <name type="scientific">Lactobacillus helveticus</name>
    <name type="common">Lactobacillus suntoryeus</name>
    <dbReference type="NCBI Taxonomy" id="1587"/>
    <lineage>
        <taxon>Bacteria</taxon>
        <taxon>Bacillati</taxon>
        <taxon>Bacillota</taxon>
        <taxon>Bacilli</taxon>
        <taxon>Lactobacillales</taxon>
        <taxon>Lactobacillaceae</taxon>
        <taxon>Lactobacillus</taxon>
    </lineage>
</organism>
<sequence length="497" mass="55469">MRAILLFYMYYAVTKGGLGMSQTTAASIMSIYGSLVYLSTLVGGWLSDRVWGSRKTVFYGGVLIMLGHIVLALPAGVTVLYRSIALIVVGTGLLKPNVSDMVGGLYSVEDPRRDAGFSIFVFGINLGSIIAPWLVPWAAQGFGVHIFGSQLNFHAGFSLAAVGMFFGLVQYVLGGKKYLSTESLTPNDPIDKGDLLNVIKWVVIIIIAIVAILAAMAGVGQLSVDNVITLLTILAIALPIYYFVMMFRSSKVTKIELGIHLLPVSLKNRLFFKKGYKRLKQIIQLELAIKRQSFIILIALIIMASILIPNKVIIAKHLLKLVLLVFYWIGLNLIPFSTFVLSFLFLDYIKHMFKKEGEQAKKTKEKSRIHHGIEIPLFLRQLIINIFTLIILEGETLFDENGVEVNIAEHPVQGYTELNINLLNKDSIDLWADWIQSVAKYLLNIMYTADVIVIIIFYLVKMAALWWAWSYIPLSTVFVGYKYSGKDESLQAALEVL</sequence>
<name>DTPT_LACHE</name>